<comment type="function">
    <text evidence="2">Involved in base excision repair of DNA damaged by oxidation or by mutagenic agents. Acts as a DNA glycosylase that recognizes and removes damaged bases. Has a preference for oxidized purines, such as 7,8-dihydro-8-oxoguanine (8-oxoG). Has AP (apurinic/apyrimidinic) lyase activity and introduces nicks in the DNA strand. Cleaves the DNA backbone by beta-delta elimination to generate a single-strand break at the site of the removed base with both 3'- and 5'-phosphates.</text>
</comment>
<comment type="catalytic activity">
    <reaction evidence="2">
        <text>Hydrolysis of DNA containing ring-opened 7-methylguanine residues, releasing 2,6-diamino-4-hydroxy-5-(N-methyl)formamidopyrimidine.</text>
        <dbReference type="EC" id="3.2.2.23"/>
    </reaction>
</comment>
<comment type="catalytic activity">
    <reaction evidence="2">
        <text>2'-deoxyribonucleotide-(2'-deoxyribose 5'-phosphate)-2'-deoxyribonucleotide-DNA = a 3'-end 2'-deoxyribonucleotide-(2,3-dehydro-2,3-deoxyribose 5'-phosphate)-DNA + a 5'-end 5'-phospho-2'-deoxyribonucleoside-DNA + H(+)</text>
        <dbReference type="Rhea" id="RHEA:66592"/>
        <dbReference type="Rhea" id="RHEA-COMP:13180"/>
        <dbReference type="Rhea" id="RHEA-COMP:16897"/>
        <dbReference type="Rhea" id="RHEA-COMP:17067"/>
        <dbReference type="ChEBI" id="CHEBI:15378"/>
        <dbReference type="ChEBI" id="CHEBI:136412"/>
        <dbReference type="ChEBI" id="CHEBI:157695"/>
        <dbReference type="ChEBI" id="CHEBI:167181"/>
        <dbReference type="EC" id="4.2.99.18"/>
    </reaction>
</comment>
<comment type="cofactor">
    <cofactor evidence="2">
        <name>Zn(2+)</name>
        <dbReference type="ChEBI" id="CHEBI:29105"/>
    </cofactor>
    <text evidence="2">Binds 1 zinc ion per subunit.</text>
</comment>
<comment type="subunit">
    <text evidence="2">Monomer.</text>
</comment>
<comment type="similarity">
    <text evidence="2">Belongs to the FPG family.</text>
</comment>
<name>FPG_ALIF1</name>
<accession>Q5E8M1</accession>
<gene>
    <name evidence="2" type="primary">mutM</name>
    <name evidence="2" type="synonym">fpg</name>
    <name type="ordered locus">VF_0130</name>
</gene>
<protein>
    <recommendedName>
        <fullName evidence="2">Formamidopyrimidine-DNA glycosylase</fullName>
        <shortName evidence="2">Fapy-DNA glycosylase</shortName>
        <ecNumber evidence="2">3.2.2.23</ecNumber>
    </recommendedName>
    <alternativeName>
        <fullName evidence="2">DNA-(apurinic or apyrimidinic site) lyase MutM</fullName>
        <shortName evidence="2">AP lyase MutM</shortName>
        <ecNumber evidence="2">4.2.99.18</ecNumber>
    </alternativeName>
</protein>
<keyword id="KW-0227">DNA damage</keyword>
<keyword id="KW-0234">DNA repair</keyword>
<keyword id="KW-0238">DNA-binding</keyword>
<keyword id="KW-0326">Glycosidase</keyword>
<keyword id="KW-0378">Hydrolase</keyword>
<keyword id="KW-0456">Lyase</keyword>
<keyword id="KW-0479">Metal-binding</keyword>
<keyword id="KW-0511">Multifunctional enzyme</keyword>
<keyword id="KW-1185">Reference proteome</keyword>
<keyword id="KW-0862">Zinc</keyword>
<keyword id="KW-0863">Zinc-finger</keyword>
<dbReference type="EC" id="3.2.2.23" evidence="2"/>
<dbReference type="EC" id="4.2.99.18" evidence="2"/>
<dbReference type="EMBL" id="CP000020">
    <property type="protein sequence ID" value="AAW84625.1"/>
    <property type="molecule type" value="Genomic_DNA"/>
</dbReference>
<dbReference type="RefSeq" id="WP_011260990.1">
    <property type="nucleotide sequence ID" value="NC_006840.2"/>
</dbReference>
<dbReference type="RefSeq" id="YP_203513.1">
    <property type="nucleotide sequence ID" value="NC_006840.2"/>
</dbReference>
<dbReference type="SMR" id="Q5E8M1"/>
<dbReference type="STRING" id="312309.VF_0130"/>
<dbReference type="EnsemblBacteria" id="AAW84625">
    <property type="protein sequence ID" value="AAW84625"/>
    <property type="gene ID" value="VF_0130"/>
</dbReference>
<dbReference type="GeneID" id="54162756"/>
<dbReference type="KEGG" id="vfi:VF_0130"/>
<dbReference type="PATRIC" id="fig|312309.11.peg.129"/>
<dbReference type="eggNOG" id="COG0266">
    <property type="taxonomic scope" value="Bacteria"/>
</dbReference>
<dbReference type="HOGENOM" id="CLU_038423_1_1_6"/>
<dbReference type="OrthoDB" id="9800855at2"/>
<dbReference type="Proteomes" id="UP000000537">
    <property type="component" value="Chromosome I"/>
</dbReference>
<dbReference type="GO" id="GO:0034039">
    <property type="term" value="F:8-oxo-7,8-dihydroguanine DNA N-glycosylase activity"/>
    <property type="evidence" value="ECO:0007669"/>
    <property type="project" value="TreeGrafter"/>
</dbReference>
<dbReference type="GO" id="GO:0140078">
    <property type="term" value="F:class I DNA-(apurinic or apyrimidinic site) endonuclease activity"/>
    <property type="evidence" value="ECO:0007669"/>
    <property type="project" value="UniProtKB-EC"/>
</dbReference>
<dbReference type="GO" id="GO:0003684">
    <property type="term" value="F:damaged DNA binding"/>
    <property type="evidence" value="ECO:0007669"/>
    <property type="project" value="InterPro"/>
</dbReference>
<dbReference type="GO" id="GO:0008270">
    <property type="term" value="F:zinc ion binding"/>
    <property type="evidence" value="ECO:0007669"/>
    <property type="project" value="UniProtKB-UniRule"/>
</dbReference>
<dbReference type="GO" id="GO:0006284">
    <property type="term" value="P:base-excision repair"/>
    <property type="evidence" value="ECO:0007669"/>
    <property type="project" value="InterPro"/>
</dbReference>
<dbReference type="CDD" id="cd08966">
    <property type="entry name" value="EcFpg-like_N"/>
    <property type="match status" value="1"/>
</dbReference>
<dbReference type="FunFam" id="1.10.8.50:FF:000003">
    <property type="entry name" value="Formamidopyrimidine-DNA glycosylase"/>
    <property type="match status" value="1"/>
</dbReference>
<dbReference type="FunFam" id="3.20.190.10:FF:000001">
    <property type="entry name" value="Formamidopyrimidine-DNA glycosylase"/>
    <property type="match status" value="1"/>
</dbReference>
<dbReference type="Gene3D" id="1.10.8.50">
    <property type="match status" value="1"/>
</dbReference>
<dbReference type="Gene3D" id="3.20.190.10">
    <property type="entry name" value="MutM-like, N-terminal"/>
    <property type="match status" value="1"/>
</dbReference>
<dbReference type="HAMAP" id="MF_00103">
    <property type="entry name" value="Fapy_DNA_glycosyl"/>
    <property type="match status" value="1"/>
</dbReference>
<dbReference type="InterPro" id="IPR015886">
    <property type="entry name" value="DNA_glyclase/AP_lyase_DNA-bd"/>
</dbReference>
<dbReference type="InterPro" id="IPR015887">
    <property type="entry name" value="DNA_glyclase_Znf_dom_DNA_BS"/>
</dbReference>
<dbReference type="InterPro" id="IPR020629">
    <property type="entry name" value="Formamido-pyr_DNA_Glyclase"/>
</dbReference>
<dbReference type="InterPro" id="IPR012319">
    <property type="entry name" value="FPG_cat"/>
</dbReference>
<dbReference type="InterPro" id="IPR035937">
    <property type="entry name" value="MutM-like_N-ter"/>
</dbReference>
<dbReference type="InterPro" id="IPR010979">
    <property type="entry name" value="Ribosomal_uS13-like_H2TH"/>
</dbReference>
<dbReference type="InterPro" id="IPR000214">
    <property type="entry name" value="Znf_DNA_glyclase/AP_lyase"/>
</dbReference>
<dbReference type="InterPro" id="IPR010663">
    <property type="entry name" value="Znf_FPG/IleRS"/>
</dbReference>
<dbReference type="NCBIfam" id="TIGR00577">
    <property type="entry name" value="fpg"/>
    <property type="match status" value="1"/>
</dbReference>
<dbReference type="NCBIfam" id="NF002211">
    <property type="entry name" value="PRK01103.1"/>
    <property type="match status" value="1"/>
</dbReference>
<dbReference type="PANTHER" id="PTHR22993">
    <property type="entry name" value="FORMAMIDOPYRIMIDINE-DNA GLYCOSYLASE"/>
    <property type="match status" value="1"/>
</dbReference>
<dbReference type="PANTHER" id="PTHR22993:SF9">
    <property type="entry name" value="FORMAMIDOPYRIMIDINE-DNA GLYCOSYLASE"/>
    <property type="match status" value="1"/>
</dbReference>
<dbReference type="Pfam" id="PF01149">
    <property type="entry name" value="Fapy_DNA_glyco"/>
    <property type="match status" value="1"/>
</dbReference>
<dbReference type="Pfam" id="PF06831">
    <property type="entry name" value="H2TH"/>
    <property type="match status" value="1"/>
</dbReference>
<dbReference type="Pfam" id="PF06827">
    <property type="entry name" value="zf-FPG_IleRS"/>
    <property type="match status" value="1"/>
</dbReference>
<dbReference type="SMART" id="SM00898">
    <property type="entry name" value="Fapy_DNA_glyco"/>
    <property type="match status" value="1"/>
</dbReference>
<dbReference type="SMART" id="SM01232">
    <property type="entry name" value="H2TH"/>
    <property type="match status" value="1"/>
</dbReference>
<dbReference type="SUPFAM" id="SSF57716">
    <property type="entry name" value="Glucocorticoid receptor-like (DNA-binding domain)"/>
    <property type="match status" value="1"/>
</dbReference>
<dbReference type="SUPFAM" id="SSF81624">
    <property type="entry name" value="N-terminal domain of MutM-like DNA repair proteins"/>
    <property type="match status" value="1"/>
</dbReference>
<dbReference type="SUPFAM" id="SSF46946">
    <property type="entry name" value="S13-like H2TH domain"/>
    <property type="match status" value="1"/>
</dbReference>
<dbReference type="PROSITE" id="PS51068">
    <property type="entry name" value="FPG_CAT"/>
    <property type="match status" value="1"/>
</dbReference>
<dbReference type="PROSITE" id="PS01242">
    <property type="entry name" value="ZF_FPG_1"/>
    <property type="match status" value="1"/>
</dbReference>
<dbReference type="PROSITE" id="PS51066">
    <property type="entry name" value="ZF_FPG_2"/>
    <property type="match status" value="1"/>
</dbReference>
<feature type="initiator methionine" description="Removed" evidence="1">
    <location>
        <position position="1"/>
    </location>
</feature>
<feature type="chain" id="PRO_0000228481" description="Formamidopyrimidine-DNA glycosylase">
    <location>
        <begin position="2"/>
        <end position="272"/>
    </location>
</feature>
<feature type="zinc finger region" description="FPG-type" evidence="2">
    <location>
        <begin position="235"/>
        <end position="269"/>
    </location>
</feature>
<feature type="active site" description="Schiff-base intermediate with DNA" evidence="2">
    <location>
        <position position="2"/>
    </location>
</feature>
<feature type="active site" description="Proton donor" evidence="2">
    <location>
        <position position="3"/>
    </location>
</feature>
<feature type="active site" description="Proton donor; for beta-elimination activity" evidence="2">
    <location>
        <position position="57"/>
    </location>
</feature>
<feature type="active site" description="Proton donor; for delta-elimination activity" evidence="2">
    <location>
        <position position="259"/>
    </location>
</feature>
<feature type="binding site" evidence="2">
    <location>
        <position position="90"/>
    </location>
    <ligand>
        <name>DNA</name>
        <dbReference type="ChEBI" id="CHEBI:16991"/>
    </ligand>
</feature>
<feature type="binding site" evidence="2">
    <location>
        <position position="109"/>
    </location>
    <ligand>
        <name>DNA</name>
        <dbReference type="ChEBI" id="CHEBI:16991"/>
    </ligand>
</feature>
<feature type="binding site" evidence="2">
    <location>
        <position position="150"/>
    </location>
    <ligand>
        <name>DNA</name>
        <dbReference type="ChEBI" id="CHEBI:16991"/>
    </ligand>
</feature>
<proteinExistence type="inferred from homology"/>
<evidence type="ECO:0000250" key="1"/>
<evidence type="ECO:0000255" key="2">
    <source>
        <dbReference type="HAMAP-Rule" id="MF_00103"/>
    </source>
</evidence>
<organism>
    <name type="scientific">Aliivibrio fischeri (strain ATCC 700601 / ES114)</name>
    <name type="common">Vibrio fischeri</name>
    <dbReference type="NCBI Taxonomy" id="312309"/>
    <lineage>
        <taxon>Bacteria</taxon>
        <taxon>Pseudomonadati</taxon>
        <taxon>Pseudomonadota</taxon>
        <taxon>Gammaproteobacteria</taxon>
        <taxon>Vibrionales</taxon>
        <taxon>Vibrionaceae</taxon>
        <taxon>Aliivibrio</taxon>
    </lineage>
</organism>
<sequence>MPELPEVETSRLGITPHLQGQTIKAIVVRTDKLRWPIPQELQKLVGQRVQSIRRRAKYLMIDTPKGSAIIHLGMSGSLRVLDEEVPSAKHDHVDLVLENGKVLRYNDPRKFGAWLYSEVGVAHQVLSKLGPEPLTNEFNSEYFAEKAKNKKTVVKQFIMNNAVVVGVGNIYASESLFMAQIHPKTSVGSLKASQITLLVAEIKKVLETAIKQGGTTLKDFNQVDGKPGYFAQELHVYGRAKKKCLLCSSIIQEEKIGQRNTFWCGHCQPFNK</sequence>
<reference key="1">
    <citation type="journal article" date="2005" name="Proc. Natl. Acad. Sci. U.S.A.">
        <title>Complete genome sequence of Vibrio fischeri: a symbiotic bacterium with pathogenic congeners.</title>
        <authorList>
            <person name="Ruby E.G."/>
            <person name="Urbanowski M."/>
            <person name="Campbell J."/>
            <person name="Dunn A."/>
            <person name="Faini M."/>
            <person name="Gunsalus R."/>
            <person name="Lostroh P."/>
            <person name="Lupp C."/>
            <person name="McCann J."/>
            <person name="Millikan D."/>
            <person name="Schaefer A."/>
            <person name="Stabb E."/>
            <person name="Stevens A."/>
            <person name="Visick K."/>
            <person name="Whistler C."/>
            <person name="Greenberg E.P."/>
        </authorList>
    </citation>
    <scope>NUCLEOTIDE SEQUENCE [LARGE SCALE GENOMIC DNA]</scope>
    <source>
        <strain>ATCC 700601 / ES114</strain>
    </source>
</reference>